<reference key="1">
    <citation type="submission" date="2000-05" db="EMBL/GenBank/DDBJ databases">
        <title>mrec8, a meiotic homolog of the rad21 cohesin family.</title>
        <authorList>
            <person name="Beasley M."/>
            <person name="Warren W."/>
            <person name="McKay M.J."/>
        </authorList>
    </citation>
    <scope>NUCLEOTIDE SEQUENCE [MRNA]</scope>
</reference>
<reference key="2">
    <citation type="journal article" date="2005" name="Science">
        <title>The transcriptional landscape of the mammalian genome.</title>
        <authorList>
            <person name="Carninci P."/>
            <person name="Kasukawa T."/>
            <person name="Katayama S."/>
            <person name="Gough J."/>
            <person name="Frith M.C."/>
            <person name="Maeda N."/>
            <person name="Oyama R."/>
            <person name="Ravasi T."/>
            <person name="Lenhard B."/>
            <person name="Wells C."/>
            <person name="Kodzius R."/>
            <person name="Shimokawa K."/>
            <person name="Bajic V.B."/>
            <person name="Brenner S.E."/>
            <person name="Batalov S."/>
            <person name="Forrest A.R."/>
            <person name="Zavolan M."/>
            <person name="Davis M.J."/>
            <person name="Wilming L.G."/>
            <person name="Aidinis V."/>
            <person name="Allen J.E."/>
            <person name="Ambesi-Impiombato A."/>
            <person name="Apweiler R."/>
            <person name="Aturaliya R.N."/>
            <person name="Bailey T.L."/>
            <person name="Bansal M."/>
            <person name="Baxter L."/>
            <person name="Beisel K.W."/>
            <person name="Bersano T."/>
            <person name="Bono H."/>
            <person name="Chalk A.M."/>
            <person name="Chiu K.P."/>
            <person name="Choudhary V."/>
            <person name="Christoffels A."/>
            <person name="Clutterbuck D.R."/>
            <person name="Crowe M.L."/>
            <person name="Dalla E."/>
            <person name="Dalrymple B.P."/>
            <person name="de Bono B."/>
            <person name="Della Gatta G."/>
            <person name="di Bernardo D."/>
            <person name="Down T."/>
            <person name="Engstrom P."/>
            <person name="Fagiolini M."/>
            <person name="Faulkner G."/>
            <person name="Fletcher C.F."/>
            <person name="Fukushima T."/>
            <person name="Furuno M."/>
            <person name="Futaki S."/>
            <person name="Gariboldi M."/>
            <person name="Georgii-Hemming P."/>
            <person name="Gingeras T.R."/>
            <person name="Gojobori T."/>
            <person name="Green R.E."/>
            <person name="Gustincich S."/>
            <person name="Harbers M."/>
            <person name="Hayashi Y."/>
            <person name="Hensch T.K."/>
            <person name="Hirokawa N."/>
            <person name="Hill D."/>
            <person name="Huminiecki L."/>
            <person name="Iacono M."/>
            <person name="Ikeo K."/>
            <person name="Iwama A."/>
            <person name="Ishikawa T."/>
            <person name="Jakt M."/>
            <person name="Kanapin A."/>
            <person name="Katoh M."/>
            <person name="Kawasawa Y."/>
            <person name="Kelso J."/>
            <person name="Kitamura H."/>
            <person name="Kitano H."/>
            <person name="Kollias G."/>
            <person name="Krishnan S.P."/>
            <person name="Kruger A."/>
            <person name="Kummerfeld S.K."/>
            <person name="Kurochkin I.V."/>
            <person name="Lareau L.F."/>
            <person name="Lazarevic D."/>
            <person name="Lipovich L."/>
            <person name="Liu J."/>
            <person name="Liuni S."/>
            <person name="McWilliam S."/>
            <person name="Madan Babu M."/>
            <person name="Madera M."/>
            <person name="Marchionni L."/>
            <person name="Matsuda H."/>
            <person name="Matsuzawa S."/>
            <person name="Miki H."/>
            <person name="Mignone F."/>
            <person name="Miyake S."/>
            <person name="Morris K."/>
            <person name="Mottagui-Tabar S."/>
            <person name="Mulder N."/>
            <person name="Nakano N."/>
            <person name="Nakauchi H."/>
            <person name="Ng P."/>
            <person name="Nilsson R."/>
            <person name="Nishiguchi S."/>
            <person name="Nishikawa S."/>
            <person name="Nori F."/>
            <person name="Ohara O."/>
            <person name="Okazaki Y."/>
            <person name="Orlando V."/>
            <person name="Pang K.C."/>
            <person name="Pavan W.J."/>
            <person name="Pavesi G."/>
            <person name="Pesole G."/>
            <person name="Petrovsky N."/>
            <person name="Piazza S."/>
            <person name="Reed J."/>
            <person name="Reid J.F."/>
            <person name="Ring B.Z."/>
            <person name="Ringwald M."/>
            <person name="Rost B."/>
            <person name="Ruan Y."/>
            <person name="Salzberg S.L."/>
            <person name="Sandelin A."/>
            <person name="Schneider C."/>
            <person name="Schoenbach C."/>
            <person name="Sekiguchi K."/>
            <person name="Semple C.A."/>
            <person name="Seno S."/>
            <person name="Sessa L."/>
            <person name="Sheng Y."/>
            <person name="Shibata Y."/>
            <person name="Shimada H."/>
            <person name="Shimada K."/>
            <person name="Silva D."/>
            <person name="Sinclair B."/>
            <person name="Sperling S."/>
            <person name="Stupka E."/>
            <person name="Sugiura K."/>
            <person name="Sultana R."/>
            <person name="Takenaka Y."/>
            <person name="Taki K."/>
            <person name="Tammoja K."/>
            <person name="Tan S.L."/>
            <person name="Tang S."/>
            <person name="Taylor M.S."/>
            <person name="Tegner J."/>
            <person name="Teichmann S.A."/>
            <person name="Ueda H.R."/>
            <person name="van Nimwegen E."/>
            <person name="Verardo R."/>
            <person name="Wei C.L."/>
            <person name="Yagi K."/>
            <person name="Yamanishi H."/>
            <person name="Zabarovsky E."/>
            <person name="Zhu S."/>
            <person name="Zimmer A."/>
            <person name="Hide W."/>
            <person name="Bult C."/>
            <person name="Grimmond S.M."/>
            <person name="Teasdale R.D."/>
            <person name="Liu E.T."/>
            <person name="Brusic V."/>
            <person name="Quackenbush J."/>
            <person name="Wahlestedt C."/>
            <person name="Mattick J.S."/>
            <person name="Hume D.A."/>
            <person name="Kai C."/>
            <person name="Sasaki D."/>
            <person name="Tomaru Y."/>
            <person name="Fukuda S."/>
            <person name="Kanamori-Katayama M."/>
            <person name="Suzuki M."/>
            <person name="Aoki J."/>
            <person name="Arakawa T."/>
            <person name="Iida J."/>
            <person name="Imamura K."/>
            <person name="Itoh M."/>
            <person name="Kato T."/>
            <person name="Kawaji H."/>
            <person name="Kawagashira N."/>
            <person name="Kawashima T."/>
            <person name="Kojima M."/>
            <person name="Kondo S."/>
            <person name="Konno H."/>
            <person name="Nakano K."/>
            <person name="Ninomiya N."/>
            <person name="Nishio T."/>
            <person name="Okada M."/>
            <person name="Plessy C."/>
            <person name="Shibata K."/>
            <person name="Shiraki T."/>
            <person name="Suzuki S."/>
            <person name="Tagami M."/>
            <person name="Waki K."/>
            <person name="Watahiki A."/>
            <person name="Okamura-Oho Y."/>
            <person name="Suzuki H."/>
            <person name="Kawai J."/>
            <person name="Hayashizaki Y."/>
        </authorList>
    </citation>
    <scope>NUCLEOTIDE SEQUENCE [LARGE SCALE MRNA]</scope>
    <source>
        <strain>C57BL/6J</strain>
        <tissue>Testis</tissue>
    </source>
</reference>
<reference key="3">
    <citation type="journal article" date="2004" name="Genome Res.">
        <title>The status, quality, and expansion of the NIH full-length cDNA project: the Mammalian Gene Collection (MGC).</title>
        <authorList>
            <consortium name="The MGC Project Team"/>
        </authorList>
    </citation>
    <scope>NUCLEOTIDE SEQUENCE [LARGE SCALE MRNA]</scope>
    <source>
        <strain>C57BL/6J</strain>
        <tissue>Embryo</tissue>
    </source>
</reference>
<reference key="4">
    <citation type="journal article" date="1999" name="Mol. Cell. Biol.">
        <title>Rec8p, a meiotic recombination and sister chromatid cohesion phosphoprotein of the Rad21p family conserved from fission yeast to humans.</title>
        <authorList>
            <person name="Parisi S."/>
            <person name="McKay M.J."/>
            <person name="Molnar M."/>
            <person name="Thompson M.A."/>
            <person name="van der Spek P.J."/>
            <person name="van Drunen-Schoenmaker E."/>
            <person name="Kanaar R."/>
            <person name="Lehmann E."/>
            <person name="Hoeijmakers J.H.J."/>
            <person name="Kohli J."/>
        </authorList>
    </citation>
    <scope>TISSUE SPECIFICITY</scope>
</reference>
<reference key="5">
    <citation type="journal article" date="2002" name="EMBO Rep.">
        <title>STAG2 and Rad21 mammalian mitotic cohesins are implicated in meiosis.</title>
        <authorList>
            <person name="Prieto I."/>
            <person name="Pezzi N."/>
            <person name="Buesa J.M."/>
            <person name="Kremer L."/>
            <person name="Barthelemy I."/>
            <person name="Carreiro C."/>
            <person name="Roncal F."/>
            <person name="Martinez A."/>
            <person name="Gomez L."/>
            <person name="Fernandez R."/>
            <person name="Martinez-A C."/>
            <person name="Barbero J.L."/>
        </authorList>
    </citation>
    <scope>FUNCTION</scope>
    <scope>SUBCELLULAR LOCATION</scope>
</reference>
<reference key="6">
    <citation type="journal article" date="2002" name="Zool. Sci.">
        <title>Analyses of mRNA expression patterns of cohesin subunits Rad21 and Rec8 in mice: germ cell-specific expression of rec8 mRNA in both male and female mice.</title>
        <authorList>
            <person name="Lee J."/>
            <person name="Yokota T."/>
            <person name="Yamashita M."/>
        </authorList>
    </citation>
    <scope>TISSUE SPECIFICITY</scope>
</reference>
<reference key="7">
    <citation type="journal article" date="2003" name="J. Cell Sci.">
        <title>Temporally and spatially selective loss of Rec8 protein from meiotic chromosomes during mammalian meiosis.</title>
        <authorList>
            <person name="Lee J."/>
            <person name="Iwai T."/>
            <person name="Yokota T."/>
            <person name="Yamashita M."/>
        </authorList>
    </citation>
    <scope>INTERACTION WITH SMC1B; SMC3 AND SYCP3</scope>
    <scope>SUBCELLULAR LOCATION</scope>
    <scope>TISSUE SPECIFICITY</scope>
    <scope>DEVELOPMENTAL STAGE</scope>
    <scope>PHOSPHORYLATION</scope>
</reference>
<reference key="8">
    <citation type="journal article" date="2004" name="Genesis">
        <title>Positional cloning and characterization of mouse mei8, a disrupted allelle of the meiotic cohesin Rec8.</title>
        <authorList>
            <person name="Bannister L.A."/>
            <person name="Reinholdt L.G."/>
            <person name="Munroe R.J."/>
            <person name="Schimenti J.C."/>
        </authorList>
    </citation>
    <scope>FUNCTION</scope>
</reference>
<reference key="9">
    <citation type="journal article" date="2005" name="Dev. Cell">
        <title>Absence of mouse REC8 cohesin promotes synapsis of sister chromatids in meiosis.</title>
        <authorList>
            <person name="Xu H."/>
            <person name="Beasley M.D."/>
            <person name="Warren W.D."/>
            <person name="van der Horst G.T.J."/>
            <person name="McKay M.J."/>
        </authorList>
    </citation>
    <scope>FUNCTION</scope>
    <scope>TISSUE SPECIFICITY</scope>
    <scope>DISRUPTION PHENOTYPE</scope>
</reference>
<reference key="10">
    <citation type="journal article" date="2006" name="Cell Cycle">
        <title>Loss of Rec8 from chromosome arm and centromere region is required for homologous chromosome separation and sister chromatid separation, respectively, in mammalian meiosis.</title>
        <authorList>
            <person name="Lee J."/>
            <person name="Okada K."/>
            <person name="Ogushi S."/>
            <person name="Miyano T."/>
            <person name="Miyake M."/>
            <person name="Yamashita M."/>
        </authorList>
    </citation>
    <scope>FUNCTION</scope>
    <scope>SUBCELLULAR LOCATION</scope>
</reference>
<reference key="11">
    <citation type="journal article" date="2010" name="Cell">
        <title>A tissue-specific atlas of mouse protein phosphorylation and expression.</title>
        <authorList>
            <person name="Huttlin E.L."/>
            <person name="Jedrychowski M.P."/>
            <person name="Elias J.E."/>
            <person name="Goswami T."/>
            <person name="Rad R."/>
            <person name="Beausoleil S.A."/>
            <person name="Villen J."/>
            <person name="Haas W."/>
            <person name="Sowa M.E."/>
            <person name="Gygi S.P."/>
        </authorList>
    </citation>
    <scope>PHOSPHORYLATION [LARGE SCALE ANALYSIS] AT SER-149</scope>
    <scope>IDENTIFICATION BY MASS SPECTROMETRY [LARGE SCALE ANALYSIS]</scope>
    <source>
        <tissue>Testis</tissue>
    </source>
</reference>
<reference key="12">
    <citation type="journal article" date="2012" name="PLoS Genet.">
        <title>Phosphorylation of chromosome core components may serve as axis marks for the status of chromosomal events during mammalian meiosis.</title>
        <authorList>
            <person name="Fukuda T."/>
            <person name="Pratto F."/>
            <person name="Schimenti J.C."/>
            <person name="Turner J.M."/>
            <person name="Camerini-Otero R.D."/>
            <person name="Hoeoeg C."/>
        </authorList>
    </citation>
    <scope>SUBCELLULAR LOCATION</scope>
    <scope>PHOSPHORYLATION</scope>
</reference>
<reference key="13">
    <citation type="journal article" date="2017" name="Mol. Biol. Cell">
        <title>PRDM9 interactions with other proteins provide a link between recombination hotspots and the chromosomal axis in meiosis.</title>
        <authorList>
            <person name="Parvanov E.D."/>
            <person name="Tian H."/>
            <person name="Billings T."/>
            <person name="Saxl R.L."/>
            <person name="Spruce C."/>
            <person name="Aithal R."/>
            <person name="Krejci L."/>
            <person name="Paigen K."/>
            <person name="Petkov P.M."/>
        </authorList>
    </citation>
    <scope>INTERACTION WITH PRDM9; EWSR1; SYCP3 AND SYCP1</scope>
</reference>
<proteinExistence type="evidence at protein level"/>
<accession>Q8C5S7</accession>
<accession>Q3UIN9</accession>
<accession>Q9JK52</accession>
<name>REC8_MOUSE</name>
<protein>
    <recommendedName>
        <fullName>Meiotic recombination protein REC8 homolog</fullName>
    </recommendedName>
    <alternativeName>
        <fullName>Cohesin Rec8p</fullName>
    </alternativeName>
</protein>
<evidence type="ECO:0000250" key="1">
    <source>
        <dbReference type="UniProtKB" id="Q6AYJ4"/>
    </source>
</evidence>
<evidence type="ECO:0000256" key="2">
    <source>
        <dbReference type="SAM" id="MobiDB-lite"/>
    </source>
</evidence>
<evidence type="ECO:0000269" key="3">
    <source>
    </source>
</evidence>
<evidence type="ECO:0000269" key="4">
    <source>
    </source>
</evidence>
<evidence type="ECO:0000269" key="5">
    <source>
    </source>
</evidence>
<evidence type="ECO:0000269" key="6">
    <source>
    </source>
</evidence>
<evidence type="ECO:0000269" key="7">
    <source>
    </source>
</evidence>
<evidence type="ECO:0000269" key="8">
    <source>
    </source>
</evidence>
<evidence type="ECO:0000269" key="9">
    <source>
    </source>
</evidence>
<evidence type="ECO:0000269" key="10">
    <source>
    </source>
</evidence>
<evidence type="ECO:0000269" key="11">
    <source>
    </source>
</evidence>
<evidence type="ECO:0000305" key="12"/>
<evidence type="ECO:0007744" key="13">
    <source>
    </source>
</evidence>
<gene>
    <name type="primary">Rec8</name>
    <name type="synonym">Mei8</name>
    <name type="synonym">Rec8L1</name>
</gene>
<comment type="function">
    <text evidence="4 7 8 9">Required during meiosis for separation of sister chromatids and homologous chromosomes. Proteolytic cleavage of REC8 on chromosome arms by separin during anaphase I allows for homologous chromosome separation in meiosis I and cleavage of REC8 on centromeres during anaphase II allows for sister chromatid separation in meiosis II.</text>
</comment>
<comment type="subunit">
    <text evidence="6 11">Interacts (phosphorylated and unphosphorylated form) with SMC3. Interacts with SYCP3. Interacts (phosphorylated and unphosphorylated form) with SMC1B. Does not interact with SMC1A. Interacts with RAD51. Forms a complex with EWSR1, PRDM9, SYCP3 and SYCP1; complex formation is dependent of phosphorylated form of REC8 and requires PRDM9 bound to hotspot DNA; EWSR1 joins PRDM9 with the chromosomal axis through REC8 (PubMed:27932493).</text>
</comment>
<comment type="subcellular location">
    <subcellularLocation>
        <location evidence="4 6 9 10">Nucleus</location>
    </subcellularLocation>
    <subcellularLocation>
        <location evidence="4 6 9 10">Chromosome</location>
    </subcellularLocation>
    <subcellularLocation>
        <location evidence="4 6 9 10">Chromosome</location>
        <location evidence="4 6 9 10">Centromere</location>
    </subcellularLocation>
    <text evidence="4 6 9 10">In meiotic chromosomes, localized along axial elements in prophase from the leptotene to diplotene stages. At later prophase stages, diakinesis and metaphase I, localized along interstitial axes of chromosomes including both centromere and arm regions. No longer detected in arm regions in anaphase I but persists on centromere regions until metaphase II.</text>
</comment>
<comment type="tissue specificity">
    <text evidence="3 5 6 8">Expressed primarily in the gonads. In the testis, expressed in pachytene spermatocytes and in spermatids. Not expressed in spermatogonia or somatic cells. In the ovary, expressed only in oocytes. Low levels also detected in a number of somatic tissues including thymus, lung, liver, kidney and small intestine.</text>
</comment>
<comment type="developmental stage">
    <text evidence="6">Expressed from 2 weeks postpartum (at protein level).</text>
</comment>
<comment type="PTM">
    <text evidence="6 10">Phosphorylated.</text>
</comment>
<comment type="disruption phenotype">
    <text evidence="8">Mice display a high mortality rate, both during embryogenesis and after birth, germ cell failure and sterility. Mutant females exhibit ovarian dysgenesis and lack ovarian follicles at reproductive maturity. Affected males have small testes due to arrest of spermatogenesis during meiotic prophase I. Early chromosome pairing appears normal but synapsis occurs between sister chromatids rather than between homologous chromosomes.</text>
</comment>
<comment type="similarity">
    <text evidence="12">Belongs to the rad21 family.</text>
</comment>
<dbReference type="EMBL" id="AF262055">
    <property type="protein sequence ID" value="AAF69524.1"/>
    <property type="molecule type" value="mRNA"/>
</dbReference>
<dbReference type="EMBL" id="AK077167">
    <property type="protein sequence ID" value="BAC36657.1"/>
    <property type="molecule type" value="mRNA"/>
</dbReference>
<dbReference type="EMBL" id="AK146832">
    <property type="protein sequence ID" value="BAE27467.1"/>
    <property type="molecule type" value="mRNA"/>
</dbReference>
<dbReference type="EMBL" id="BC052155">
    <property type="protein sequence ID" value="AAH52155.1"/>
    <property type="molecule type" value="mRNA"/>
</dbReference>
<dbReference type="CCDS" id="CCDS27120.1"/>
<dbReference type="RefSeq" id="NP_064386.2">
    <property type="nucleotide sequence ID" value="NM_020002.3"/>
</dbReference>
<dbReference type="SMR" id="Q8C5S7"/>
<dbReference type="BioGRID" id="208153">
    <property type="interactions" value="1"/>
</dbReference>
<dbReference type="CORUM" id="Q8C5S7"/>
<dbReference type="DIP" id="DIP-60730N"/>
<dbReference type="FunCoup" id="Q8C5S7">
    <property type="interactions" value="240"/>
</dbReference>
<dbReference type="IntAct" id="Q8C5S7">
    <property type="interactions" value="5"/>
</dbReference>
<dbReference type="MINT" id="Q8C5S7"/>
<dbReference type="STRING" id="10090.ENSMUSP00000002395"/>
<dbReference type="iPTMnet" id="Q8C5S7"/>
<dbReference type="PhosphoSitePlus" id="Q8C5S7"/>
<dbReference type="PaxDb" id="10090-ENSMUSP00000002395"/>
<dbReference type="PeptideAtlas" id="Q8C5S7"/>
<dbReference type="ProteomicsDB" id="254910"/>
<dbReference type="Antibodypedia" id="22688">
    <property type="antibodies" value="239 antibodies from 29 providers"/>
</dbReference>
<dbReference type="DNASU" id="56739"/>
<dbReference type="Ensembl" id="ENSMUST00000002395.8">
    <property type="protein sequence ID" value="ENSMUSP00000002395.8"/>
    <property type="gene ID" value="ENSMUSG00000002324.9"/>
</dbReference>
<dbReference type="GeneID" id="56739"/>
<dbReference type="KEGG" id="mmu:56739"/>
<dbReference type="UCSC" id="uc007tzo.2">
    <property type="organism name" value="mouse"/>
</dbReference>
<dbReference type="AGR" id="MGI:1929645"/>
<dbReference type="CTD" id="9985"/>
<dbReference type="MGI" id="MGI:1929645">
    <property type="gene designation" value="Rec8"/>
</dbReference>
<dbReference type="VEuPathDB" id="HostDB:ENSMUSG00000002324"/>
<dbReference type="eggNOG" id="KOG1213">
    <property type="taxonomic scope" value="Eukaryota"/>
</dbReference>
<dbReference type="GeneTree" id="ENSGT00390000011379"/>
<dbReference type="HOGENOM" id="CLU_036680_0_0_1"/>
<dbReference type="InParanoid" id="Q8C5S7"/>
<dbReference type="OMA" id="RVYFQQC"/>
<dbReference type="OrthoDB" id="10071381at2759"/>
<dbReference type="PhylomeDB" id="Q8C5S7"/>
<dbReference type="TreeFam" id="TF338144"/>
<dbReference type="BioGRID-ORCS" id="56739">
    <property type="hits" value="6 hits in 113 CRISPR screens"/>
</dbReference>
<dbReference type="PRO" id="PR:Q8C5S7"/>
<dbReference type="Proteomes" id="UP000000589">
    <property type="component" value="Chromosome 14"/>
</dbReference>
<dbReference type="RNAct" id="Q8C5S7">
    <property type="molecule type" value="protein"/>
</dbReference>
<dbReference type="Bgee" id="ENSMUSG00000002324">
    <property type="expression patterns" value="Expressed in spermatid and 124 other cell types or tissues"/>
</dbReference>
<dbReference type="GO" id="GO:0000793">
    <property type="term" value="C:condensed chromosome"/>
    <property type="evidence" value="ECO:0000314"/>
    <property type="project" value="MGI"/>
</dbReference>
<dbReference type="GO" id="GO:0000779">
    <property type="term" value="C:condensed chromosome, centromeric region"/>
    <property type="evidence" value="ECO:0000314"/>
    <property type="project" value="MGI"/>
</dbReference>
<dbReference type="GO" id="GO:0000794">
    <property type="term" value="C:condensed nuclear chromosome"/>
    <property type="evidence" value="ECO:0000314"/>
    <property type="project" value="MGI"/>
</dbReference>
<dbReference type="GO" id="GO:0000776">
    <property type="term" value="C:kinetochore"/>
    <property type="evidence" value="ECO:0000314"/>
    <property type="project" value="MGI"/>
</dbReference>
<dbReference type="GO" id="GO:0000800">
    <property type="term" value="C:lateral element"/>
    <property type="evidence" value="ECO:0000314"/>
    <property type="project" value="MGI"/>
</dbReference>
<dbReference type="GO" id="GO:0001673">
    <property type="term" value="C:male germ cell nucleus"/>
    <property type="evidence" value="ECO:0000314"/>
    <property type="project" value="MGI"/>
</dbReference>
<dbReference type="GO" id="GO:0030893">
    <property type="term" value="C:meiotic cohesin complex"/>
    <property type="evidence" value="ECO:0000314"/>
    <property type="project" value="MGI"/>
</dbReference>
<dbReference type="GO" id="GO:0005654">
    <property type="term" value="C:nucleoplasm"/>
    <property type="evidence" value="ECO:0000304"/>
    <property type="project" value="Reactome"/>
</dbReference>
<dbReference type="GO" id="GO:0005634">
    <property type="term" value="C:nucleus"/>
    <property type="evidence" value="ECO:0000314"/>
    <property type="project" value="MGI"/>
</dbReference>
<dbReference type="GO" id="GO:0000795">
    <property type="term" value="C:synaptonemal complex"/>
    <property type="evidence" value="ECO:0000314"/>
    <property type="project" value="MGI"/>
</dbReference>
<dbReference type="GO" id="GO:0000724">
    <property type="term" value="P:double-strand break repair via homologous recombination"/>
    <property type="evidence" value="ECO:0000316"/>
    <property type="project" value="MGI"/>
</dbReference>
<dbReference type="GO" id="GO:0009566">
    <property type="term" value="P:fertilization"/>
    <property type="evidence" value="ECO:0000315"/>
    <property type="project" value="MGI"/>
</dbReference>
<dbReference type="GO" id="GO:0007129">
    <property type="term" value="P:homologous chromosome pairing at meiosis"/>
    <property type="evidence" value="ECO:0000315"/>
    <property type="project" value="MGI"/>
</dbReference>
<dbReference type="GO" id="GO:0007141">
    <property type="term" value="P:male meiosis I"/>
    <property type="evidence" value="ECO:0000315"/>
    <property type="project" value="MGI"/>
</dbReference>
<dbReference type="GO" id="GO:0051321">
    <property type="term" value="P:meiotic cell cycle"/>
    <property type="evidence" value="ECO:0000353"/>
    <property type="project" value="MGI"/>
</dbReference>
<dbReference type="GO" id="GO:0001556">
    <property type="term" value="P:oocyte maturation"/>
    <property type="evidence" value="ECO:0000315"/>
    <property type="project" value="MGI"/>
</dbReference>
<dbReference type="GO" id="GO:0072520">
    <property type="term" value="P:seminiferous tubule development"/>
    <property type="evidence" value="ECO:0000316"/>
    <property type="project" value="MGI"/>
</dbReference>
<dbReference type="GO" id="GO:0007062">
    <property type="term" value="P:sister chromatid cohesion"/>
    <property type="evidence" value="ECO:0007669"/>
    <property type="project" value="InterPro"/>
</dbReference>
<dbReference type="GO" id="GO:0007286">
    <property type="term" value="P:spermatid development"/>
    <property type="evidence" value="ECO:0000315"/>
    <property type="project" value="MGI"/>
</dbReference>
<dbReference type="GO" id="GO:0007130">
    <property type="term" value="P:synaptonemal complex assembly"/>
    <property type="evidence" value="ECO:0000316"/>
    <property type="project" value="MGI"/>
</dbReference>
<dbReference type="CDD" id="cd21794">
    <property type="entry name" value="Rad21_Rec8_M_Rec8"/>
    <property type="match status" value="1"/>
</dbReference>
<dbReference type="Gene3D" id="1.10.10.580">
    <property type="entry name" value="Structural maintenance of chromosome 1. Chain E"/>
    <property type="match status" value="1"/>
</dbReference>
<dbReference type="InterPro" id="IPR039781">
    <property type="entry name" value="Rad21/Rec8-like"/>
</dbReference>
<dbReference type="InterPro" id="IPR006909">
    <property type="entry name" value="Rad21/Rec8_C_eu"/>
</dbReference>
<dbReference type="InterPro" id="IPR006910">
    <property type="entry name" value="Rad21_Rec8_N"/>
</dbReference>
<dbReference type="InterPro" id="IPR023093">
    <property type="entry name" value="ScpA-like_C"/>
</dbReference>
<dbReference type="InterPro" id="IPR036390">
    <property type="entry name" value="WH_DNA-bd_sf"/>
</dbReference>
<dbReference type="PANTHER" id="PTHR12585:SF27">
    <property type="entry name" value="MEIOTIC RECOMBINATION PROTEIN REC8 HOMOLOG"/>
    <property type="match status" value="1"/>
</dbReference>
<dbReference type="PANTHER" id="PTHR12585">
    <property type="entry name" value="SCC1 / RAD21 FAMILY MEMBER"/>
    <property type="match status" value="1"/>
</dbReference>
<dbReference type="Pfam" id="PF04824">
    <property type="entry name" value="Rad21_Rec8"/>
    <property type="match status" value="1"/>
</dbReference>
<dbReference type="Pfam" id="PF04825">
    <property type="entry name" value="Rad21_Rec8_N"/>
    <property type="match status" value="1"/>
</dbReference>
<dbReference type="SUPFAM" id="SSF46785">
    <property type="entry name" value="Winged helix' DNA-binding domain"/>
    <property type="match status" value="1"/>
</dbReference>
<organism>
    <name type="scientific">Mus musculus</name>
    <name type="common">Mouse</name>
    <dbReference type="NCBI Taxonomy" id="10090"/>
    <lineage>
        <taxon>Eukaryota</taxon>
        <taxon>Metazoa</taxon>
        <taxon>Chordata</taxon>
        <taxon>Craniata</taxon>
        <taxon>Vertebrata</taxon>
        <taxon>Euteleostomi</taxon>
        <taxon>Mammalia</taxon>
        <taxon>Eutheria</taxon>
        <taxon>Euarchontoglires</taxon>
        <taxon>Glires</taxon>
        <taxon>Rodentia</taxon>
        <taxon>Myomorpha</taxon>
        <taxon>Muroidea</taxon>
        <taxon>Muridae</taxon>
        <taxon>Murinae</taxon>
        <taxon>Mus</taxon>
        <taxon>Mus</taxon>
    </lineage>
</organism>
<keyword id="KW-0137">Centromere</keyword>
<keyword id="KW-0158">Chromosome</keyword>
<keyword id="KW-0159">Chromosome partition</keyword>
<keyword id="KW-0469">Meiosis</keyword>
<keyword id="KW-0539">Nucleus</keyword>
<keyword id="KW-0597">Phosphoprotein</keyword>
<keyword id="KW-1185">Reference proteome</keyword>
<feature type="chain" id="PRO_0000097879" description="Meiotic recombination protein REC8 homolog">
    <location>
        <begin position="1"/>
        <end position="591"/>
    </location>
</feature>
<feature type="region of interest" description="Disordered" evidence="2">
    <location>
        <begin position="163"/>
        <end position="186"/>
    </location>
</feature>
<feature type="region of interest" description="Disordered" evidence="2">
    <location>
        <begin position="316"/>
        <end position="336"/>
    </location>
</feature>
<feature type="region of interest" description="Disordered" evidence="2">
    <location>
        <begin position="420"/>
        <end position="447"/>
    </location>
</feature>
<feature type="compositionally biased region" description="Basic and acidic residues" evidence="2">
    <location>
        <begin position="163"/>
        <end position="185"/>
    </location>
</feature>
<feature type="compositionally biased region" description="Acidic residues" evidence="2">
    <location>
        <begin position="425"/>
        <end position="438"/>
    </location>
</feature>
<feature type="modified residue" description="Phosphoserine" evidence="13">
    <location>
        <position position="149"/>
    </location>
</feature>
<feature type="modified residue" description="Phosphothreonine" evidence="1">
    <location>
        <position position="164"/>
    </location>
</feature>
<feature type="modified residue" description="Phosphoserine" evidence="1">
    <location>
        <position position="192"/>
    </location>
</feature>
<feature type="sequence conflict" description="In Ref. 1; AAF69524." evidence="12" ref="1">
    <original>V</original>
    <variation>E</variation>
    <location>
        <position position="49"/>
    </location>
</feature>
<sequence length="591" mass="67425">MFYYPNVLQRHTGCFATIWLAATRGSRLVKREYLNVNVVKTCEEILNYVLVRVQPPVAGLPRPRFSLYLSAQLQIGVIRVYFQQCQYLVEDIQHILEHLHRAQLRIRIDMEEADLPSLLLPNCLAMMETLEDAPEPFFGKMSVDPRLPSPFDIPQIRHLLEAATPEKTRKETLPEATPDPRKPDRTLATVQSPEVITLQEAEPIRMLQIEGEQDLPEISRGDLELLIAEKDDAILLEERQRGRLLRQRRASLPLDESREEPRALEGAGLVSALSPPAPAQVEGIQEALPGQVFPPEVQKMTGWEPGALLTEVTPPQELRLPAPPSTEKRLPSLQRPLPRRHRRRQLLFWDKETQISREKFEEQLQTGAHCWEYPVAQPPKRMLTSPAELFRTPTLSGWLPPELLGLWTHCAQVPQRMLRQRPQLETEETVEEERAADEEERRKTEALSEIEVLREAQEPSGPLMLSSELSLEAAEDEKSRTSLIPPEWWAWSEEGQPEPPALPMLPELPEVPMEMPPRPELSSEAVLRAVALKLQANKELDFSSLVPPLSPRKLASRVFYLLLVLSTQKILLVEQQKPYGPLLIRPGPKFP</sequence>